<feature type="chain" id="PRO_1000122922" description="Phosphoribosylaminoimidazole-succinocarboxamide synthase">
    <location>
        <begin position="1"/>
        <end position="238"/>
    </location>
</feature>
<organism>
    <name type="scientific">Persephonella marina (strain DSM 14350 / EX-H1)</name>
    <dbReference type="NCBI Taxonomy" id="123214"/>
    <lineage>
        <taxon>Bacteria</taxon>
        <taxon>Pseudomonadati</taxon>
        <taxon>Aquificota</taxon>
        <taxon>Aquificia</taxon>
        <taxon>Aquificales</taxon>
        <taxon>Hydrogenothermaceae</taxon>
        <taxon>Persephonella</taxon>
    </lineage>
</organism>
<proteinExistence type="inferred from homology"/>
<reference key="1">
    <citation type="journal article" date="2009" name="J. Bacteriol.">
        <title>Complete and draft genome sequences of six members of the Aquificales.</title>
        <authorList>
            <person name="Reysenbach A.-L."/>
            <person name="Hamamura N."/>
            <person name="Podar M."/>
            <person name="Griffiths E."/>
            <person name="Ferreira S."/>
            <person name="Hochstein R."/>
            <person name="Heidelberg J."/>
            <person name="Johnson J."/>
            <person name="Mead D."/>
            <person name="Pohorille A."/>
            <person name="Sarmiento M."/>
            <person name="Schweighofer K."/>
            <person name="Seshadri R."/>
            <person name="Voytek M.A."/>
        </authorList>
    </citation>
    <scope>NUCLEOTIDE SEQUENCE [LARGE SCALE GENOMIC DNA]</scope>
    <source>
        <strain>DSM 14350 / EX-H1</strain>
    </source>
</reference>
<evidence type="ECO:0000255" key="1">
    <source>
        <dbReference type="HAMAP-Rule" id="MF_00137"/>
    </source>
</evidence>
<accession>C0QUE7</accession>
<comment type="catalytic activity">
    <reaction evidence="1">
        <text>5-amino-1-(5-phospho-D-ribosyl)imidazole-4-carboxylate + L-aspartate + ATP = (2S)-2-[5-amino-1-(5-phospho-beta-D-ribosyl)imidazole-4-carboxamido]succinate + ADP + phosphate + 2 H(+)</text>
        <dbReference type="Rhea" id="RHEA:22628"/>
        <dbReference type="ChEBI" id="CHEBI:15378"/>
        <dbReference type="ChEBI" id="CHEBI:29991"/>
        <dbReference type="ChEBI" id="CHEBI:30616"/>
        <dbReference type="ChEBI" id="CHEBI:43474"/>
        <dbReference type="ChEBI" id="CHEBI:58443"/>
        <dbReference type="ChEBI" id="CHEBI:77657"/>
        <dbReference type="ChEBI" id="CHEBI:456216"/>
        <dbReference type="EC" id="6.3.2.6"/>
    </reaction>
</comment>
<comment type="pathway">
    <text evidence="1">Purine metabolism; IMP biosynthesis via de novo pathway; 5-amino-1-(5-phospho-D-ribosyl)imidazole-4-carboxamide from 5-amino-1-(5-phospho-D-ribosyl)imidazole-4-carboxylate: step 1/2.</text>
</comment>
<comment type="similarity">
    <text evidence="1">Belongs to the SAICAR synthetase family.</text>
</comment>
<gene>
    <name evidence="1" type="primary">purC</name>
    <name type="ordered locus">PERMA_0523</name>
</gene>
<keyword id="KW-0067">ATP-binding</keyword>
<keyword id="KW-0436">Ligase</keyword>
<keyword id="KW-0547">Nucleotide-binding</keyword>
<keyword id="KW-0658">Purine biosynthesis</keyword>
<keyword id="KW-1185">Reference proteome</keyword>
<dbReference type="EC" id="6.3.2.6" evidence="1"/>
<dbReference type="EMBL" id="CP001230">
    <property type="protein sequence ID" value="ACO03521.1"/>
    <property type="molecule type" value="Genomic_DNA"/>
</dbReference>
<dbReference type="RefSeq" id="WP_012675760.1">
    <property type="nucleotide sequence ID" value="NC_012440.1"/>
</dbReference>
<dbReference type="SMR" id="C0QUE7"/>
<dbReference type="STRING" id="123214.PERMA_0523"/>
<dbReference type="PaxDb" id="123214-PERMA_0523"/>
<dbReference type="KEGG" id="pmx:PERMA_0523"/>
<dbReference type="eggNOG" id="COG0152">
    <property type="taxonomic scope" value="Bacteria"/>
</dbReference>
<dbReference type="HOGENOM" id="CLU_061495_2_0_0"/>
<dbReference type="OrthoDB" id="9801549at2"/>
<dbReference type="UniPathway" id="UPA00074">
    <property type="reaction ID" value="UER00131"/>
</dbReference>
<dbReference type="Proteomes" id="UP000001366">
    <property type="component" value="Chromosome"/>
</dbReference>
<dbReference type="GO" id="GO:0005524">
    <property type="term" value="F:ATP binding"/>
    <property type="evidence" value="ECO:0007669"/>
    <property type="project" value="UniProtKB-KW"/>
</dbReference>
<dbReference type="GO" id="GO:0004639">
    <property type="term" value="F:phosphoribosylaminoimidazolesuccinocarboxamide synthase activity"/>
    <property type="evidence" value="ECO:0007669"/>
    <property type="project" value="UniProtKB-UniRule"/>
</dbReference>
<dbReference type="GO" id="GO:0006189">
    <property type="term" value="P:'de novo' IMP biosynthetic process"/>
    <property type="evidence" value="ECO:0007669"/>
    <property type="project" value="UniProtKB-UniRule"/>
</dbReference>
<dbReference type="GO" id="GO:0009236">
    <property type="term" value="P:cobalamin biosynthetic process"/>
    <property type="evidence" value="ECO:0007669"/>
    <property type="project" value="InterPro"/>
</dbReference>
<dbReference type="CDD" id="cd01415">
    <property type="entry name" value="SAICAR_synt_PurC"/>
    <property type="match status" value="1"/>
</dbReference>
<dbReference type="FunFam" id="3.30.200.20:FF:000086">
    <property type="entry name" value="Phosphoribosylaminoimidazole-succinocarboxamide synthase"/>
    <property type="match status" value="1"/>
</dbReference>
<dbReference type="FunFam" id="3.30.470.20:FF:000006">
    <property type="entry name" value="Phosphoribosylaminoimidazole-succinocarboxamide synthase"/>
    <property type="match status" value="1"/>
</dbReference>
<dbReference type="Gene3D" id="3.30.470.20">
    <property type="entry name" value="ATP-grasp fold, B domain"/>
    <property type="match status" value="1"/>
</dbReference>
<dbReference type="Gene3D" id="3.30.200.20">
    <property type="entry name" value="Phosphorylase Kinase, domain 1"/>
    <property type="match status" value="1"/>
</dbReference>
<dbReference type="HAMAP" id="MF_00137">
    <property type="entry name" value="SAICAR_synth"/>
    <property type="match status" value="1"/>
</dbReference>
<dbReference type="InterPro" id="IPR028923">
    <property type="entry name" value="SAICAR_synt/ADE2_N"/>
</dbReference>
<dbReference type="InterPro" id="IPR033934">
    <property type="entry name" value="SAICAR_synt_PurC"/>
</dbReference>
<dbReference type="InterPro" id="IPR001636">
    <property type="entry name" value="SAICAR_synth"/>
</dbReference>
<dbReference type="InterPro" id="IPR050089">
    <property type="entry name" value="SAICAR_synthetase"/>
</dbReference>
<dbReference type="InterPro" id="IPR018236">
    <property type="entry name" value="SAICAR_synthetase_CS"/>
</dbReference>
<dbReference type="NCBIfam" id="TIGR00081">
    <property type="entry name" value="purC"/>
    <property type="match status" value="1"/>
</dbReference>
<dbReference type="PANTHER" id="PTHR43599">
    <property type="entry name" value="MULTIFUNCTIONAL PROTEIN ADE2"/>
    <property type="match status" value="1"/>
</dbReference>
<dbReference type="PANTHER" id="PTHR43599:SF3">
    <property type="entry name" value="SI:DKEY-6E2.2"/>
    <property type="match status" value="1"/>
</dbReference>
<dbReference type="Pfam" id="PF01259">
    <property type="entry name" value="SAICAR_synt"/>
    <property type="match status" value="1"/>
</dbReference>
<dbReference type="SUPFAM" id="SSF56104">
    <property type="entry name" value="SAICAR synthase-like"/>
    <property type="match status" value="1"/>
</dbReference>
<dbReference type="PROSITE" id="PS01057">
    <property type="entry name" value="SAICAR_SYNTHETASE_1"/>
    <property type="match status" value="1"/>
</dbReference>
<dbReference type="PROSITE" id="PS01058">
    <property type="entry name" value="SAICAR_SYNTHETASE_2"/>
    <property type="match status" value="1"/>
</dbReference>
<sequence>MEKREKLYEGKAKIIYATDEPDKVIAYYKDSATAFDAIKKATIEGKGVLNNKIASFFFQLLNEKGIPTHFIKQISDREMLIYKVDIIPVEVVVRNIAAGSIVKRLGIPEKKEFDPPLVEFYLKNDELHDPIICEQHIYAMDLAKPEEVQKMKELALKVNDVLREFMREQGIILVDFKLEFGRKDGQIILADEISPDTCRFWDAKTGEKLDKDRFRFDLGDLIEGYTKILEKIQKKEGE</sequence>
<name>PUR7_PERMH</name>
<protein>
    <recommendedName>
        <fullName evidence="1">Phosphoribosylaminoimidazole-succinocarboxamide synthase</fullName>
        <ecNumber evidence="1">6.3.2.6</ecNumber>
    </recommendedName>
    <alternativeName>
        <fullName evidence="1">SAICAR synthetase</fullName>
    </alternativeName>
</protein>